<feature type="chain" id="PRO_0000305910" description="Mediator of RNA polymerase II transcription subunit 30">
    <location>
        <begin position="1"/>
        <end position="318"/>
    </location>
</feature>
<feature type="region of interest" description="Disordered" evidence="1">
    <location>
        <begin position="1"/>
        <end position="92"/>
    </location>
</feature>
<feature type="region of interest" description="Disordered" evidence="1">
    <location>
        <begin position="120"/>
        <end position="142"/>
    </location>
</feature>
<feature type="compositionally biased region" description="Low complexity" evidence="1">
    <location>
        <begin position="1"/>
        <end position="13"/>
    </location>
</feature>
<feature type="compositionally biased region" description="Gly residues" evidence="1">
    <location>
        <begin position="14"/>
        <end position="33"/>
    </location>
</feature>
<feature type="compositionally biased region" description="Low complexity" evidence="1">
    <location>
        <begin position="34"/>
        <end position="55"/>
    </location>
</feature>
<feature type="compositionally biased region" description="Low complexity" evidence="1">
    <location>
        <begin position="78"/>
        <end position="92"/>
    </location>
</feature>
<feature type="compositionally biased region" description="Low complexity" evidence="1">
    <location>
        <begin position="124"/>
        <end position="142"/>
    </location>
</feature>
<dbReference type="EMBL" id="AE014296">
    <property type="protein sequence ID" value="AAF47400.1"/>
    <property type="molecule type" value="Genomic_DNA"/>
</dbReference>
<dbReference type="EMBL" id="AY061627">
    <property type="protein sequence ID" value="AAL29175.1"/>
    <property type="molecule type" value="mRNA"/>
</dbReference>
<dbReference type="RefSeq" id="NP_612046.1">
    <property type="nucleotide sequence ID" value="NM_138202.4"/>
</dbReference>
<dbReference type="SMR" id="Q9W0P3"/>
<dbReference type="BioGRID" id="63633">
    <property type="interactions" value="35"/>
</dbReference>
<dbReference type="ComplexPortal" id="CPX-2308">
    <property type="entry name" value="Core mediator complex"/>
</dbReference>
<dbReference type="DIP" id="DIP-22594N"/>
<dbReference type="FunCoup" id="Q9W0P3">
    <property type="interactions" value="791"/>
</dbReference>
<dbReference type="IntAct" id="Q9W0P3">
    <property type="interactions" value="60"/>
</dbReference>
<dbReference type="STRING" id="7227.FBpp0072457"/>
<dbReference type="PaxDb" id="7227-FBpp0072457"/>
<dbReference type="DNASU" id="38078"/>
<dbReference type="EnsemblMetazoa" id="FBtr0072558">
    <property type="protein sequence ID" value="FBpp0072457"/>
    <property type="gene ID" value="FBgn0035149"/>
</dbReference>
<dbReference type="GeneID" id="38078"/>
<dbReference type="KEGG" id="dme:Dmel_CG17183"/>
<dbReference type="AGR" id="FB:FBgn0035149"/>
<dbReference type="CTD" id="90390"/>
<dbReference type="FlyBase" id="FBgn0035149">
    <property type="gene designation" value="MED30"/>
</dbReference>
<dbReference type="VEuPathDB" id="VectorBase:FBgn0035149"/>
<dbReference type="eggNOG" id="ENOG502QV3C">
    <property type="taxonomic scope" value="Eukaryota"/>
</dbReference>
<dbReference type="GeneTree" id="ENSGT00390000010887"/>
<dbReference type="HOGENOM" id="CLU_074190_0_0_1"/>
<dbReference type="InParanoid" id="Q9W0P3"/>
<dbReference type="OMA" id="HRDNNTE"/>
<dbReference type="OrthoDB" id="10067025at2759"/>
<dbReference type="PhylomeDB" id="Q9W0P3"/>
<dbReference type="Reactome" id="R-DME-9841922">
    <property type="pathway name" value="MLL4 and MLL3 complexes regulate expression of PPARG target genes in adipogenesis and hepatic steatosis"/>
</dbReference>
<dbReference type="BioGRID-ORCS" id="38078">
    <property type="hits" value="0 hits in 1 CRISPR screen"/>
</dbReference>
<dbReference type="GenomeRNAi" id="38078"/>
<dbReference type="PRO" id="PR:Q9W0P3"/>
<dbReference type="Proteomes" id="UP000000803">
    <property type="component" value="Chromosome 3L"/>
</dbReference>
<dbReference type="Bgee" id="FBgn0035149">
    <property type="expression patterns" value="Expressed in secondary oocyte and 61 other cell types or tissues"/>
</dbReference>
<dbReference type="GO" id="GO:0016592">
    <property type="term" value="C:mediator complex"/>
    <property type="evidence" value="ECO:0000314"/>
    <property type="project" value="UniProtKB"/>
</dbReference>
<dbReference type="GO" id="GO:0005634">
    <property type="term" value="C:nucleus"/>
    <property type="evidence" value="ECO:0000314"/>
    <property type="project" value="FlyBase"/>
</dbReference>
<dbReference type="GO" id="GO:0003712">
    <property type="term" value="F:transcription coregulator activity"/>
    <property type="evidence" value="ECO:0000314"/>
    <property type="project" value="UniProtKB"/>
</dbReference>
<dbReference type="GO" id="GO:0045893">
    <property type="term" value="P:positive regulation of DNA-templated transcription"/>
    <property type="evidence" value="ECO:0000318"/>
    <property type="project" value="GO_Central"/>
</dbReference>
<dbReference type="GO" id="GO:0006357">
    <property type="term" value="P:regulation of transcription by RNA polymerase II"/>
    <property type="evidence" value="ECO:0000314"/>
    <property type="project" value="UniProtKB"/>
</dbReference>
<dbReference type="InterPro" id="IPR021019">
    <property type="entry name" value="Mediator_Med30_met"/>
</dbReference>
<dbReference type="PANTHER" id="PTHR31705">
    <property type="entry name" value="MEDIATOR OF RNA POLYMERASE II TRANSCRIPTION SUBUNIT 30"/>
    <property type="match status" value="1"/>
</dbReference>
<dbReference type="PANTHER" id="PTHR31705:SF4">
    <property type="entry name" value="MEDIATOR OF RNA POLYMERASE II TRANSCRIPTION SUBUNIT 30"/>
    <property type="match status" value="1"/>
</dbReference>
<dbReference type="Pfam" id="PF11315">
    <property type="entry name" value="Med30"/>
    <property type="match status" value="1"/>
</dbReference>
<organism>
    <name type="scientific">Drosophila melanogaster</name>
    <name type="common">Fruit fly</name>
    <dbReference type="NCBI Taxonomy" id="7227"/>
    <lineage>
        <taxon>Eukaryota</taxon>
        <taxon>Metazoa</taxon>
        <taxon>Ecdysozoa</taxon>
        <taxon>Arthropoda</taxon>
        <taxon>Hexapoda</taxon>
        <taxon>Insecta</taxon>
        <taxon>Pterygota</taxon>
        <taxon>Neoptera</taxon>
        <taxon>Endopterygota</taxon>
        <taxon>Diptera</taxon>
        <taxon>Brachycera</taxon>
        <taxon>Muscomorpha</taxon>
        <taxon>Ephydroidea</taxon>
        <taxon>Drosophilidae</taxon>
        <taxon>Drosophila</taxon>
        <taxon>Sophophora</taxon>
    </lineage>
</organism>
<keyword id="KW-0010">Activator</keyword>
<keyword id="KW-0539">Nucleus</keyword>
<keyword id="KW-1185">Reference proteome</keyword>
<keyword id="KW-0804">Transcription</keyword>
<keyword id="KW-0805">Transcription regulation</keyword>
<proteinExistence type="evidence at protein level"/>
<accession>Q9W0P3</accession>
<gene>
    <name type="primary">MED30</name>
    <name type="synonym">Trap25</name>
    <name type="ORF">CG17183</name>
</gene>
<evidence type="ECO:0000256" key="1">
    <source>
        <dbReference type="SAM" id="MobiDB-lite"/>
    </source>
</evidence>
<evidence type="ECO:0000269" key="2">
    <source>
    </source>
</evidence>
<evidence type="ECO:0000305" key="3"/>
<protein>
    <recommendedName>
        <fullName>Mediator of RNA polymerase II transcription subunit 30</fullName>
    </recommendedName>
    <alternativeName>
        <fullName>Mediator complex subunit 30</fullName>
    </alternativeName>
    <alternativeName>
        <fullName>dMED20</fullName>
    </alternativeName>
    <alternativeName>
        <fullName>dTRAP25</fullName>
    </alternativeName>
</protein>
<sequence>MWKYGQNQGNQGPSSGGGGGGGPNMMPMGGFGMQHGNMQQMHMSPQHQQQQQQMGMMGGPGSMQMNPQGPGGPGGLMPGMSPQHQMQQQQQQQMMQQQMMVPQQGVGVGVGMGGGVGMGGGGVVPQQQQQQPQQNMPQQNIPQQQQQLNPVAGIPPGGAGGSNNMLAISQQNPHKEINIVQLSRLGQETVQDIASRFQEVFASLKGIQPTSHRENSSEKKVQEYFRTIRLLFKRVRIIYEKCNDAGMDYMSAESLIPYRDEPEPRIEPSLCDEYRKVLQENHELIETVKLKNRQLREIIDRTRIIIWEINTMLAMRRS</sequence>
<reference key="1">
    <citation type="journal article" date="2000" name="Science">
        <title>The genome sequence of Drosophila melanogaster.</title>
        <authorList>
            <person name="Adams M.D."/>
            <person name="Celniker S.E."/>
            <person name="Holt R.A."/>
            <person name="Evans C.A."/>
            <person name="Gocayne J.D."/>
            <person name="Amanatides P.G."/>
            <person name="Scherer S.E."/>
            <person name="Li P.W."/>
            <person name="Hoskins R.A."/>
            <person name="Galle R.F."/>
            <person name="George R.A."/>
            <person name="Lewis S.E."/>
            <person name="Richards S."/>
            <person name="Ashburner M."/>
            <person name="Henderson S.N."/>
            <person name="Sutton G.G."/>
            <person name="Wortman J.R."/>
            <person name="Yandell M.D."/>
            <person name="Zhang Q."/>
            <person name="Chen L.X."/>
            <person name="Brandon R.C."/>
            <person name="Rogers Y.-H.C."/>
            <person name="Blazej R.G."/>
            <person name="Champe M."/>
            <person name="Pfeiffer B.D."/>
            <person name="Wan K.H."/>
            <person name="Doyle C."/>
            <person name="Baxter E.G."/>
            <person name="Helt G."/>
            <person name="Nelson C.R."/>
            <person name="Miklos G.L.G."/>
            <person name="Abril J.F."/>
            <person name="Agbayani A."/>
            <person name="An H.-J."/>
            <person name="Andrews-Pfannkoch C."/>
            <person name="Baldwin D."/>
            <person name="Ballew R.M."/>
            <person name="Basu A."/>
            <person name="Baxendale J."/>
            <person name="Bayraktaroglu L."/>
            <person name="Beasley E.M."/>
            <person name="Beeson K.Y."/>
            <person name="Benos P.V."/>
            <person name="Berman B.P."/>
            <person name="Bhandari D."/>
            <person name="Bolshakov S."/>
            <person name="Borkova D."/>
            <person name="Botchan M.R."/>
            <person name="Bouck J."/>
            <person name="Brokstein P."/>
            <person name="Brottier P."/>
            <person name="Burtis K.C."/>
            <person name="Busam D.A."/>
            <person name="Butler H."/>
            <person name="Cadieu E."/>
            <person name="Center A."/>
            <person name="Chandra I."/>
            <person name="Cherry J.M."/>
            <person name="Cawley S."/>
            <person name="Dahlke C."/>
            <person name="Davenport L.B."/>
            <person name="Davies P."/>
            <person name="de Pablos B."/>
            <person name="Delcher A."/>
            <person name="Deng Z."/>
            <person name="Mays A.D."/>
            <person name="Dew I."/>
            <person name="Dietz S.M."/>
            <person name="Dodson K."/>
            <person name="Doup L.E."/>
            <person name="Downes M."/>
            <person name="Dugan-Rocha S."/>
            <person name="Dunkov B.C."/>
            <person name="Dunn P."/>
            <person name="Durbin K.J."/>
            <person name="Evangelista C.C."/>
            <person name="Ferraz C."/>
            <person name="Ferriera S."/>
            <person name="Fleischmann W."/>
            <person name="Fosler C."/>
            <person name="Gabrielian A.E."/>
            <person name="Garg N.S."/>
            <person name="Gelbart W.M."/>
            <person name="Glasser K."/>
            <person name="Glodek A."/>
            <person name="Gong F."/>
            <person name="Gorrell J.H."/>
            <person name="Gu Z."/>
            <person name="Guan P."/>
            <person name="Harris M."/>
            <person name="Harris N.L."/>
            <person name="Harvey D.A."/>
            <person name="Heiman T.J."/>
            <person name="Hernandez J.R."/>
            <person name="Houck J."/>
            <person name="Hostin D."/>
            <person name="Houston K.A."/>
            <person name="Howland T.J."/>
            <person name="Wei M.-H."/>
            <person name="Ibegwam C."/>
            <person name="Jalali M."/>
            <person name="Kalush F."/>
            <person name="Karpen G.H."/>
            <person name="Ke Z."/>
            <person name="Kennison J.A."/>
            <person name="Ketchum K.A."/>
            <person name="Kimmel B.E."/>
            <person name="Kodira C.D."/>
            <person name="Kraft C.L."/>
            <person name="Kravitz S."/>
            <person name="Kulp D."/>
            <person name="Lai Z."/>
            <person name="Lasko P."/>
            <person name="Lei Y."/>
            <person name="Levitsky A.A."/>
            <person name="Li J.H."/>
            <person name="Li Z."/>
            <person name="Liang Y."/>
            <person name="Lin X."/>
            <person name="Liu X."/>
            <person name="Mattei B."/>
            <person name="McIntosh T.C."/>
            <person name="McLeod M.P."/>
            <person name="McPherson D."/>
            <person name="Merkulov G."/>
            <person name="Milshina N.V."/>
            <person name="Mobarry C."/>
            <person name="Morris J."/>
            <person name="Moshrefi A."/>
            <person name="Mount S.M."/>
            <person name="Moy M."/>
            <person name="Murphy B."/>
            <person name="Murphy L."/>
            <person name="Muzny D.M."/>
            <person name="Nelson D.L."/>
            <person name="Nelson D.R."/>
            <person name="Nelson K.A."/>
            <person name="Nixon K."/>
            <person name="Nusskern D.R."/>
            <person name="Pacleb J.M."/>
            <person name="Palazzolo M."/>
            <person name="Pittman G.S."/>
            <person name="Pan S."/>
            <person name="Pollard J."/>
            <person name="Puri V."/>
            <person name="Reese M.G."/>
            <person name="Reinert K."/>
            <person name="Remington K."/>
            <person name="Saunders R.D.C."/>
            <person name="Scheeler F."/>
            <person name="Shen H."/>
            <person name="Shue B.C."/>
            <person name="Siden-Kiamos I."/>
            <person name="Simpson M."/>
            <person name="Skupski M.P."/>
            <person name="Smith T.J."/>
            <person name="Spier E."/>
            <person name="Spradling A.C."/>
            <person name="Stapleton M."/>
            <person name="Strong R."/>
            <person name="Sun E."/>
            <person name="Svirskas R."/>
            <person name="Tector C."/>
            <person name="Turner R."/>
            <person name="Venter E."/>
            <person name="Wang A.H."/>
            <person name="Wang X."/>
            <person name="Wang Z.-Y."/>
            <person name="Wassarman D.A."/>
            <person name="Weinstock G.M."/>
            <person name="Weissenbach J."/>
            <person name="Williams S.M."/>
            <person name="Woodage T."/>
            <person name="Worley K.C."/>
            <person name="Wu D."/>
            <person name="Yang S."/>
            <person name="Yao Q.A."/>
            <person name="Ye J."/>
            <person name="Yeh R.-F."/>
            <person name="Zaveri J.S."/>
            <person name="Zhan M."/>
            <person name="Zhang G."/>
            <person name="Zhao Q."/>
            <person name="Zheng L."/>
            <person name="Zheng X.H."/>
            <person name="Zhong F.N."/>
            <person name="Zhong W."/>
            <person name="Zhou X."/>
            <person name="Zhu S.C."/>
            <person name="Zhu X."/>
            <person name="Smith H.O."/>
            <person name="Gibbs R.A."/>
            <person name="Myers E.W."/>
            <person name="Rubin G.M."/>
            <person name="Venter J.C."/>
        </authorList>
    </citation>
    <scope>NUCLEOTIDE SEQUENCE [LARGE SCALE GENOMIC DNA]</scope>
    <source>
        <strain>Berkeley</strain>
    </source>
</reference>
<reference key="2">
    <citation type="journal article" date="2002" name="Genome Biol.">
        <title>Annotation of the Drosophila melanogaster euchromatic genome: a systematic review.</title>
        <authorList>
            <person name="Misra S."/>
            <person name="Crosby M.A."/>
            <person name="Mungall C.J."/>
            <person name="Matthews B.B."/>
            <person name="Campbell K.S."/>
            <person name="Hradecky P."/>
            <person name="Huang Y."/>
            <person name="Kaminker J.S."/>
            <person name="Millburn G.H."/>
            <person name="Prochnik S.E."/>
            <person name="Smith C.D."/>
            <person name="Tupy J.L."/>
            <person name="Whitfield E.J."/>
            <person name="Bayraktaroglu L."/>
            <person name="Berman B.P."/>
            <person name="Bettencourt B.R."/>
            <person name="Celniker S.E."/>
            <person name="de Grey A.D.N.J."/>
            <person name="Drysdale R.A."/>
            <person name="Harris N.L."/>
            <person name="Richter J."/>
            <person name="Russo S."/>
            <person name="Schroeder A.J."/>
            <person name="Shu S.Q."/>
            <person name="Stapleton M."/>
            <person name="Yamada C."/>
            <person name="Ashburner M."/>
            <person name="Gelbart W.M."/>
            <person name="Rubin G.M."/>
            <person name="Lewis S.E."/>
        </authorList>
    </citation>
    <scope>GENOME REANNOTATION</scope>
    <source>
        <strain>Berkeley</strain>
    </source>
</reference>
<reference key="3">
    <citation type="submission" date="2003-01" db="EMBL/GenBank/DDBJ databases">
        <authorList>
            <person name="Stapleton M."/>
            <person name="Brokstein P."/>
            <person name="Hong L."/>
            <person name="Agbayani A."/>
            <person name="Carlson J.W."/>
            <person name="Champe M."/>
            <person name="Chavez C."/>
            <person name="Dorsett V."/>
            <person name="Dresnek D."/>
            <person name="Farfan D."/>
            <person name="Frise E."/>
            <person name="George R.A."/>
            <person name="Gonzalez M."/>
            <person name="Guarin H."/>
            <person name="Kronmiller B."/>
            <person name="Li P.W."/>
            <person name="Liao G."/>
            <person name="Miranda A."/>
            <person name="Mungall C.J."/>
            <person name="Nunoo J."/>
            <person name="Pacleb J.M."/>
            <person name="Paragas V."/>
            <person name="Park S."/>
            <person name="Patel S."/>
            <person name="Phouanenavong S."/>
            <person name="Wan K.H."/>
            <person name="Yu C."/>
            <person name="Lewis S.E."/>
            <person name="Rubin G.M."/>
            <person name="Celniker S.E."/>
        </authorList>
    </citation>
    <scope>NUCLEOTIDE SEQUENCE [LARGE SCALE MRNA]</scope>
    <source>
        <strain>Berkeley</strain>
        <tissue>Embryo</tissue>
    </source>
</reference>
<reference key="4">
    <citation type="journal article" date="2002" name="J. Biol. Chem.">
        <title>Novel Mediator proteins of the small Mediator complex in Drosophila SL2 cells.</title>
        <authorList>
            <person name="Gu J.-Y."/>
            <person name="Park J.M."/>
            <person name="Song E.J."/>
            <person name="Mizuguchi G."/>
            <person name="Yoon J.H."/>
            <person name="Kim-Ha J."/>
            <person name="Lee K.-J."/>
            <person name="Kim Y.-J."/>
        </authorList>
    </citation>
    <scope>IDENTIFICATION BY MASS SPECTROMETRY</scope>
    <scope>IDENTIFICATION IN THE MEDIATOR COMPLEX</scope>
    <scope>FUNCTION OF THE MEDIATOR COMPLEX</scope>
    <scope>INTERACTION WITH MED6 AND MED17</scope>
</reference>
<name>MED30_DROME</name>
<comment type="function">
    <text evidence="2">Component of the Mediator complex, a coactivator involved in the regulated transcription of nearly all RNA polymerase II-dependent genes. Mediator functions as a bridge to convey information from gene-specific regulatory proteins to the basal RNA polymerase II transcription machinery. Mediator is recruited to promoters by direct interactions with regulatory proteins and serves as a scaffold for the assembly of a functional preinitiation complex with RNA polymerase II and the general transcription factors.</text>
</comment>
<comment type="subunit">
    <text evidence="2">Component of the Mediator complex, which includes at least CDK8, MED4, MED6, MED11, MED14, MED17, MED18, MED20, MED21, MED22, MED27, MED28, MED30 and MED31.</text>
</comment>
<comment type="subcellular location">
    <subcellularLocation>
        <location evidence="3">Nucleus</location>
    </subcellularLocation>
</comment>
<comment type="similarity">
    <text evidence="3">Belongs to the Mediator complex subunit 30 family.</text>
</comment>